<organism>
    <name type="scientific">Mannheimia succiniciproducens (strain KCTC 0769BP / MBEL55E)</name>
    <dbReference type="NCBI Taxonomy" id="221988"/>
    <lineage>
        <taxon>Bacteria</taxon>
        <taxon>Pseudomonadati</taxon>
        <taxon>Pseudomonadota</taxon>
        <taxon>Gammaproteobacteria</taxon>
        <taxon>Pasteurellales</taxon>
        <taxon>Pasteurellaceae</taxon>
        <taxon>Basfia</taxon>
    </lineage>
</organism>
<protein>
    <recommendedName>
        <fullName evidence="1">Autonomous glycyl radical cofactor</fullName>
    </recommendedName>
</protein>
<proteinExistence type="inferred from homology"/>
<reference key="1">
    <citation type="journal article" date="2004" name="Nat. Biotechnol.">
        <title>The genome sequence of the capnophilic rumen bacterium Mannheimia succiniciproducens.</title>
        <authorList>
            <person name="Hong S.H."/>
            <person name="Kim J.S."/>
            <person name="Lee S.Y."/>
            <person name="In Y.H."/>
            <person name="Choi S.S."/>
            <person name="Rih J.-K."/>
            <person name="Kim C.H."/>
            <person name="Jeong H."/>
            <person name="Hur C.G."/>
            <person name="Kim J.J."/>
        </authorList>
    </citation>
    <scope>NUCLEOTIDE SEQUENCE [LARGE SCALE GENOMIC DNA]</scope>
    <source>
        <strain>KCTC 0769BP / MBEL55E</strain>
    </source>
</reference>
<sequence>MIKGIQITKAANDNLLNSFWLLDSDKGEARCLAAKAEFAEDQIVAINELGQIEYRELAVDVAPTIKVEGGQHLNVNVLRRETLEDAVNNPDKYPQLTIRVSGYAVRFNSLTPEQQRDVITRTFTESL</sequence>
<keyword id="KW-0556">Organic radical</keyword>
<comment type="function">
    <text evidence="1">Acts as a radical domain for damaged PFL and possibly other radical proteins.</text>
</comment>
<gene>
    <name evidence="1" type="primary">grcA</name>
    <name type="ordered locus">MS0372</name>
</gene>
<evidence type="ECO:0000255" key="1">
    <source>
        <dbReference type="HAMAP-Rule" id="MF_00806"/>
    </source>
</evidence>
<feature type="chain" id="PRO_0000166703" description="Autonomous glycyl radical cofactor">
    <location>
        <begin position="1"/>
        <end position="127"/>
    </location>
</feature>
<feature type="domain" description="Glycine radical" evidence="1">
    <location>
        <begin position="5"/>
        <end position="127"/>
    </location>
</feature>
<feature type="modified residue" description="Glycine radical" evidence="1">
    <location>
        <position position="102"/>
    </location>
</feature>
<dbReference type="EMBL" id="AE016827">
    <property type="protein sequence ID" value="AAU36979.1"/>
    <property type="molecule type" value="Genomic_DNA"/>
</dbReference>
<dbReference type="RefSeq" id="WP_011199554.1">
    <property type="nucleotide sequence ID" value="NC_006300.1"/>
</dbReference>
<dbReference type="SMR" id="Q65VN1"/>
<dbReference type="STRING" id="221988.MS0372"/>
<dbReference type="KEGG" id="msu:MS0372"/>
<dbReference type="eggNOG" id="COG3445">
    <property type="taxonomic scope" value="Bacteria"/>
</dbReference>
<dbReference type="HOGENOM" id="CLU_133780_0_0_6"/>
<dbReference type="OrthoDB" id="9803969at2"/>
<dbReference type="Proteomes" id="UP000000607">
    <property type="component" value="Chromosome"/>
</dbReference>
<dbReference type="GO" id="GO:0005829">
    <property type="term" value="C:cytosol"/>
    <property type="evidence" value="ECO:0007669"/>
    <property type="project" value="TreeGrafter"/>
</dbReference>
<dbReference type="GO" id="GO:0008861">
    <property type="term" value="F:formate C-acetyltransferase activity"/>
    <property type="evidence" value="ECO:0007669"/>
    <property type="project" value="TreeGrafter"/>
</dbReference>
<dbReference type="FunFam" id="3.20.70.20:FF:000002">
    <property type="entry name" value="Autonomous glycyl radical cofactor"/>
    <property type="match status" value="1"/>
</dbReference>
<dbReference type="Gene3D" id="3.20.70.20">
    <property type="match status" value="1"/>
</dbReference>
<dbReference type="HAMAP" id="MF_00806">
    <property type="entry name" value="GrcA"/>
    <property type="match status" value="1"/>
</dbReference>
<dbReference type="InterPro" id="IPR050244">
    <property type="entry name" value="Auton_GlycylRad_Cofactor"/>
</dbReference>
<dbReference type="InterPro" id="IPR019777">
    <property type="entry name" value="Form_AcTrfase_GR_CS"/>
</dbReference>
<dbReference type="InterPro" id="IPR001150">
    <property type="entry name" value="Gly_radical"/>
</dbReference>
<dbReference type="InterPro" id="IPR011140">
    <property type="entry name" value="Glycyl_radical_cofactor_GrcA"/>
</dbReference>
<dbReference type="NCBIfam" id="TIGR04365">
    <property type="entry name" value="spare_glycyl"/>
    <property type="match status" value="1"/>
</dbReference>
<dbReference type="PANTHER" id="PTHR30191">
    <property type="entry name" value="FORMATE ACETYLTRANSFERASE"/>
    <property type="match status" value="1"/>
</dbReference>
<dbReference type="PANTHER" id="PTHR30191:SF0">
    <property type="entry name" value="FORMATE ACETYLTRANSFERASE 1"/>
    <property type="match status" value="1"/>
</dbReference>
<dbReference type="Pfam" id="PF01228">
    <property type="entry name" value="Gly_radical"/>
    <property type="match status" value="1"/>
</dbReference>
<dbReference type="PIRSF" id="PIRSF000378">
    <property type="entry name" value="Gly_radicl_yfiD"/>
    <property type="match status" value="1"/>
</dbReference>
<dbReference type="SUPFAM" id="SSF51998">
    <property type="entry name" value="PFL-like glycyl radical enzymes"/>
    <property type="match status" value="1"/>
</dbReference>
<dbReference type="PROSITE" id="PS00850">
    <property type="entry name" value="GLY_RADICAL_1"/>
    <property type="match status" value="1"/>
</dbReference>
<dbReference type="PROSITE" id="PS51149">
    <property type="entry name" value="GLY_RADICAL_2"/>
    <property type="match status" value="1"/>
</dbReference>
<name>GRCA_MANSM</name>
<accession>Q65VN1</accession>